<accession>Q5NMC3</accession>
<keyword id="KW-0030">Aminoacyl-tRNA synthetase</keyword>
<keyword id="KW-0067">ATP-binding</keyword>
<keyword id="KW-0963">Cytoplasm</keyword>
<keyword id="KW-0436">Ligase</keyword>
<keyword id="KW-0460">Magnesium</keyword>
<keyword id="KW-0479">Metal-binding</keyword>
<keyword id="KW-0547">Nucleotide-binding</keyword>
<keyword id="KW-0648">Protein biosynthesis</keyword>
<keyword id="KW-1185">Reference proteome</keyword>
<keyword id="KW-0694">RNA-binding</keyword>
<keyword id="KW-0820">tRNA-binding</keyword>
<proteinExistence type="inferred from homology"/>
<reference key="1">
    <citation type="journal article" date="2005" name="Nat. Biotechnol.">
        <title>The genome sequence of the ethanologenic bacterium Zymomonas mobilis ZM4.</title>
        <authorList>
            <person name="Seo J.-S."/>
            <person name="Chong H."/>
            <person name="Park H.S."/>
            <person name="Yoon K.-O."/>
            <person name="Jung C."/>
            <person name="Kim J.J."/>
            <person name="Hong J.H."/>
            <person name="Kim H."/>
            <person name="Kim J.-H."/>
            <person name="Kil J.-I."/>
            <person name="Park C.J."/>
            <person name="Oh H.-M."/>
            <person name="Lee J.-S."/>
            <person name="Jin S.-J."/>
            <person name="Um H.-W."/>
            <person name="Lee H.-J."/>
            <person name="Oh S.-J."/>
            <person name="Kim J.Y."/>
            <person name="Kang H.L."/>
            <person name="Lee S.Y."/>
            <person name="Lee K.J."/>
            <person name="Kang H.S."/>
        </authorList>
    </citation>
    <scope>NUCLEOTIDE SEQUENCE [LARGE SCALE GENOMIC DNA]</scope>
    <source>
        <strain>ATCC 31821 / ZM4 / CP4</strain>
    </source>
</reference>
<gene>
    <name evidence="1" type="primary">pheT</name>
    <name type="ordered locus">ZMO1513</name>
</gene>
<sequence>MKFTLSWLKEHLETEASVQEIADTLTRIGHEVESVHNPADGLEAFRIARILTAERHPQADRLQILAVDVGESEPLQVVCGAANARAGLVGVFAAPGVYVPGIDVTLKIASIRGVESRGMMCSIRELGLGDEHEGILDLPHEAPVGQSYVEWAGLDDPVFDVAITPDRQDCMGVRGLARDLATAGIGRLKPLAIPRVPVTDAAPAEIAIEDKEGCPAFFGQLIHGIQNGPSPEWMARRLRAIGFRPTSALVDITNYIMFDLGRPLHVYDAGAIKGKLTARKAQNNEKIEALNGKSYDLDPSITVIADDQGVKNIAGIMGAEKASVSGSTTDVIIECAYFDPAAVSQAGQKLGLASDARIRFERGVDPAFLNEGLQIAARMVLDFCGGKATQAVTLGEAPSAVPVISYDPSYVTSLAAMDVAPARQREILEQLGFAIDAGWRVRVPSFRRDVSVVADIVADIVRIEGLDNVPSTALDRGDGVARPIATHGQLTERRVRRAAAAFGMNEAVTWSFISEKDANIFGGAFWKLANPISEDMKVMRPSLLPGLLTAAKRNRDRGQSTIRLFEVGRRYLQEAERPTLGLIFAGERMSRDWQYGKSQNFDAYDAKTAVSAMLDSVGMPVEKLQLLGDAGDVYHPGRSGRLCLGPKNTLAVFGEIHPAILAEFNMEGPVIGAEIFLDALPLRKNSGQLRQPYAPSMLQPVFRDFAFLLPKDVPAADLVRSIAGADKNAIVEARIFDVFTGETIDENEKSLGIEVMLQPAEKSFTDAELQGISDKIVAAAAKKGARLRA</sequence>
<organism>
    <name type="scientific">Zymomonas mobilis subsp. mobilis (strain ATCC 31821 / ZM4 / CP4)</name>
    <dbReference type="NCBI Taxonomy" id="264203"/>
    <lineage>
        <taxon>Bacteria</taxon>
        <taxon>Pseudomonadati</taxon>
        <taxon>Pseudomonadota</taxon>
        <taxon>Alphaproteobacteria</taxon>
        <taxon>Sphingomonadales</taxon>
        <taxon>Zymomonadaceae</taxon>
        <taxon>Zymomonas</taxon>
    </lineage>
</organism>
<protein>
    <recommendedName>
        <fullName evidence="1">Phenylalanine--tRNA ligase beta subunit</fullName>
        <ecNumber evidence="1">6.1.1.20</ecNumber>
    </recommendedName>
    <alternativeName>
        <fullName evidence="1">Phenylalanyl-tRNA synthetase beta subunit</fullName>
        <shortName evidence="1">PheRS</shortName>
    </alternativeName>
</protein>
<feature type="chain" id="PRO_0000232832" description="Phenylalanine--tRNA ligase beta subunit">
    <location>
        <begin position="1"/>
        <end position="789"/>
    </location>
</feature>
<feature type="domain" description="tRNA-binding" evidence="1">
    <location>
        <begin position="39"/>
        <end position="149"/>
    </location>
</feature>
<feature type="domain" description="B5" evidence="1">
    <location>
        <begin position="399"/>
        <end position="471"/>
    </location>
</feature>
<feature type="domain" description="FDX-ACB" evidence="1">
    <location>
        <begin position="696"/>
        <end position="788"/>
    </location>
</feature>
<feature type="binding site" evidence="1">
    <location>
        <position position="449"/>
    </location>
    <ligand>
        <name>Mg(2+)</name>
        <dbReference type="ChEBI" id="CHEBI:18420"/>
        <note>shared with alpha subunit</note>
    </ligand>
</feature>
<feature type="binding site" evidence="1">
    <location>
        <position position="455"/>
    </location>
    <ligand>
        <name>Mg(2+)</name>
        <dbReference type="ChEBI" id="CHEBI:18420"/>
        <note>shared with alpha subunit</note>
    </ligand>
</feature>
<feature type="binding site" evidence="1">
    <location>
        <position position="459"/>
    </location>
    <ligand>
        <name>Mg(2+)</name>
        <dbReference type="ChEBI" id="CHEBI:18420"/>
        <note>shared with alpha subunit</note>
    </ligand>
</feature>
<evidence type="ECO:0000255" key="1">
    <source>
        <dbReference type="HAMAP-Rule" id="MF_00283"/>
    </source>
</evidence>
<evidence type="ECO:0000305" key="2"/>
<comment type="catalytic activity">
    <reaction evidence="1">
        <text>tRNA(Phe) + L-phenylalanine + ATP = L-phenylalanyl-tRNA(Phe) + AMP + diphosphate + H(+)</text>
        <dbReference type="Rhea" id="RHEA:19413"/>
        <dbReference type="Rhea" id="RHEA-COMP:9668"/>
        <dbReference type="Rhea" id="RHEA-COMP:9699"/>
        <dbReference type="ChEBI" id="CHEBI:15378"/>
        <dbReference type="ChEBI" id="CHEBI:30616"/>
        <dbReference type="ChEBI" id="CHEBI:33019"/>
        <dbReference type="ChEBI" id="CHEBI:58095"/>
        <dbReference type="ChEBI" id="CHEBI:78442"/>
        <dbReference type="ChEBI" id="CHEBI:78531"/>
        <dbReference type="ChEBI" id="CHEBI:456215"/>
        <dbReference type="EC" id="6.1.1.20"/>
    </reaction>
</comment>
<comment type="cofactor">
    <cofactor evidence="1">
        <name>Mg(2+)</name>
        <dbReference type="ChEBI" id="CHEBI:18420"/>
    </cofactor>
    <text evidence="1">Binds 2 magnesium ions per tetramer.</text>
</comment>
<comment type="subunit">
    <text evidence="1">Tetramer of two alpha and two beta subunits.</text>
</comment>
<comment type="subcellular location">
    <subcellularLocation>
        <location evidence="1">Cytoplasm</location>
    </subcellularLocation>
</comment>
<comment type="similarity">
    <text evidence="1">Belongs to the phenylalanyl-tRNA synthetase beta subunit family. Type 1 subfamily.</text>
</comment>
<comment type="caution">
    <text evidence="2">Lacks the conserved aspartate or glutamate residue in position 458 that binds magnesium; it is replaced by an alanine residue.</text>
</comment>
<dbReference type="EC" id="6.1.1.20" evidence="1"/>
<dbReference type="EMBL" id="AE008692">
    <property type="protein sequence ID" value="AAV90137.1"/>
    <property type="molecule type" value="Genomic_DNA"/>
</dbReference>
<dbReference type="RefSeq" id="WP_011241285.1">
    <property type="nucleotide sequence ID" value="NZ_CP035711.1"/>
</dbReference>
<dbReference type="SMR" id="Q5NMC3"/>
<dbReference type="STRING" id="264203.ZMO1513"/>
<dbReference type="KEGG" id="zmo:ZMO1513"/>
<dbReference type="eggNOG" id="COG0072">
    <property type="taxonomic scope" value="Bacteria"/>
</dbReference>
<dbReference type="eggNOG" id="COG0073">
    <property type="taxonomic scope" value="Bacteria"/>
</dbReference>
<dbReference type="HOGENOM" id="CLU_016891_0_0_5"/>
<dbReference type="Proteomes" id="UP000001173">
    <property type="component" value="Chromosome"/>
</dbReference>
<dbReference type="GO" id="GO:0009328">
    <property type="term" value="C:phenylalanine-tRNA ligase complex"/>
    <property type="evidence" value="ECO:0007669"/>
    <property type="project" value="TreeGrafter"/>
</dbReference>
<dbReference type="GO" id="GO:0005524">
    <property type="term" value="F:ATP binding"/>
    <property type="evidence" value="ECO:0007669"/>
    <property type="project" value="UniProtKB-UniRule"/>
</dbReference>
<dbReference type="GO" id="GO:0000287">
    <property type="term" value="F:magnesium ion binding"/>
    <property type="evidence" value="ECO:0007669"/>
    <property type="project" value="UniProtKB-UniRule"/>
</dbReference>
<dbReference type="GO" id="GO:0004826">
    <property type="term" value="F:phenylalanine-tRNA ligase activity"/>
    <property type="evidence" value="ECO:0007669"/>
    <property type="project" value="UniProtKB-UniRule"/>
</dbReference>
<dbReference type="GO" id="GO:0000049">
    <property type="term" value="F:tRNA binding"/>
    <property type="evidence" value="ECO:0007669"/>
    <property type="project" value="UniProtKB-KW"/>
</dbReference>
<dbReference type="GO" id="GO:0006432">
    <property type="term" value="P:phenylalanyl-tRNA aminoacylation"/>
    <property type="evidence" value="ECO:0007669"/>
    <property type="project" value="UniProtKB-UniRule"/>
</dbReference>
<dbReference type="CDD" id="cd00769">
    <property type="entry name" value="PheRS_beta_core"/>
    <property type="match status" value="1"/>
</dbReference>
<dbReference type="CDD" id="cd02796">
    <property type="entry name" value="tRNA_bind_bactPheRS"/>
    <property type="match status" value="1"/>
</dbReference>
<dbReference type="FunFam" id="2.40.50.140:FF:000045">
    <property type="entry name" value="Phenylalanine--tRNA ligase beta subunit"/>
    <property type="match status" value="1"/>
</dbReference>
<dbReference type="Gene3D" id="3.30.56.10">
    <property type="match status" value="2"/>
</dbReference>
<dbReference type="Gene3D" id="3.30.930.10">
    <property type="entry name" value="Bira Bifunctional Protein, Domain 2"/>
    <property type="match status" value="1"/>
</dbReference>
<dbReference type="Gene3D" id="3.30.70.380">
    <property type="entry name" value="Ferrodoxin-fold anticodon-binding domain"/>
    <property type="match status" value="1"/>
</dbReference>
<dbReference type="Gene3D" id="2.40.50.140">
    <property type="entry name" value="Nucleic acid-binding proteins"/>
    <property type="match status" value="1"/>
</dbReference>
<dbReference type="Gene3D" id="3.50.40.10">
    <property type="entry name" value="Phenylalanyl-trna Synthetase, Chain B, domain 3"/>
    <property type="match status" value="1"/>
</dbReference>
<dbReference type="HAMAP" id="MF_00283">
    <property type="entry name" value="Phe_tRNA_synth_beta1"/>
    <property type="match status" value="1"/>
</dbReference>
<dbReference type="InterPro" id="IPR045864">
    <property type="entry name" value="aa-tRNA-synth_II/BPL/LPL"/>
</dbReference>
<dbReference type="InterPro" id="IPR005146">
    <property type="entry name" value="B3/B4_tRNA-bd"/>
</dbReference>
<dbReference type="InterPro" id="IPR009061">
    <property type="entry name" value="DNA-bd_dom_put_sf"/>
</dbReference>
<dbReference type="InterPro" id="IPR005121">
    <property type="entry name" value="Fdx_antiC-bd"/>
</dbReference>
<dbReference type="InterPro" id="IPR036690">
    <property type="entry name" value="Fdx_antiC-bd_sf"/>
</dbReference>
<dbReference type="InterPro" id="IPR012340">
    <property type="entry name" value="NA-bd_OB-fold"/>
</dbReference>
<dbReference type="InterPro" id="IPR045060">
    <property type="entry name" value="Phe-tRNA-ligase_IIc_bsu"/>
</dbReference>
<dbReference type="InterPro" id="IPR004532">
    <property type="entry name" value="Phe-tRNA-ligase_IIc_bsu_bact"/>
</dbReference>
<dbReference type="InterPro" id="IPR020825">
    <property type="entry name" value="Phe-tRNA_synthase-like_B3/B4"/>
</dbReference>
<dbReference type="InterPro" id="IPR041616">
    <property type="entry name" value="PheRS_beta_core"/>
</dbReference>
<dbReference type="InterPro" id="IPR002547">
    <property type="entry name" value="tRNA-bd_dom"/>
</dbReference>
<dbReference type="InterPro" id="IPR033714">
    <property type="entry name" value="tRNA_bind_bactPheRS"/>
</dbReference>
<dbReference type="InterPro" id="IPR005147">
    <property type="entry name" value="tRNA_synthase_B5-dom"/>
</dbReference>
<dbReference type="NCBIfam" id="TIGR00472">
    <property type="entry name" value="pheT_bact"/>
    <property type="match status" value="1"/>
</dbReference>
<dbReference type="NCBIfam" id="NF045760">
    <property type="entry name" value="YtpR"/>
    <property type="match status" value="1"/>
</dbReference>
<dbReference type="PANTHER" id="PTHR10947:SF0">
    <property type="entry name" value="PHENYLALANINE--TRNA LIGASE BETA SUBUNIT"/>
    <property type="match status" value="1"/>
</dbReference>
<dbReference type="PANTHER" id="PTHR10947">
    <property type="entry name" value="PHENYLALANYL-TRNA SYNTHETASE BETA CHAIN AND LEUCINE-RICH REPEAT-CONTAINING PROTEIN 47"/>
    <property type="match status" value="1"/>
</dbReference>
<dbReference type="Pfam" id="PF03483">
    <property type="entry name" value="B3_4"/>
    <property type="match status" value="1"/>
</dbReference>
<dbReference type="Pfam" id="PF03484">
    <property type="entry name" value="B5"/>
    <property type="match status" value="1"/>
</dbReference>
<dbReference type="Pfam" id="PF03147">
    <property type="entry name" value="FDX-ACB"/>
    <property type="match status" value="1"/>
</dbReference>
<dbReference type="Pfam" id="PF01588">
    <property type="entry name" value="tRNA_bind"/>
    <property type="match status" value="1"/>
</dbReference>
<dbReference type="Pfam" id="PF17759">
    <property type="entry name" value="tRNA_synthFbeta"/>
    <property type="match status" value="1"/>
</dbReference>
<dbReference type="SMART" id="SM00873">
    <property type="entry name" value="B3_4"/>
    <property type="match status" value="1"/>
</dbReference>
<dbReference type="SMART" id="SM00874">
    <property type="entry name" value="B5"/>
    <property type="match status" value="1"/>
</dbReference>
<dbReference type="SMART" id="SM00896">
    <property type="entry name" value="FDX-ACB"/>
    <property type="match status" value="1"/>
</dbReference>
<dbReference type="SUPFAM" id="SSF54991">
    <property type="entry name" value="Anticodon-binding domain of PheRS"/>
    <property type="match status" value="1"/>
</dbReference>
<dbReference type="SUPFAM" id="SSF55681">
    <property type="entry name" value="Class II aaRS and biotin synthetases"/>
    <property type="match status" value="1"/>
</dbReference>
<dbReference type="SUPFAM" id="SSF50249">
    <property type="entry name" value="Nucleic acid-binding proteins"/>
    <property type="match status" value="1"/>
</dbReference>
<dbReference type="SUPFAM" id="SSF56037">
    <property type="entry name" value="PheT/TilS domain"/>
    <property type="match status" value="1"/>
</dbReference>
<dbReference type="SUPFAM" id="SSF46955">
    <property type="entry name" value="Putative DNA-binding domain"/>
    <property type="match status" value="1"/>
</dbReference>
<dbReference type="PROSITE" id="PS51483">
    <property type="entry name" value="B5"/>
    <property type="match status" value="1"/>
</dbReference>
<dbReference type="PROSITE" id="PS51447">
    <property type="entry name" value="FDX_ACB"/>
    <property type="match status" value="1"/>
</dbReference>
<dbReference type="PROSITE" id="PS50886">
    <property type="entry name" value="TRBD"/>
    <property type="match status" value="1"/>
</dbReference>
<name>SYFB_ZYMMO</name>